<sequence>MARLQEYYRSTVVQQLMEQFGYKSVMEVPRIRKITLNMGVGEAVADKKIMDNAVGDMQKIAGQKPVVTKARKSIATFKVRDGYPVGCMVTLRRVRMYEFLDRLVNIAIPRIRDFRGISGRSFDGRGNYNMGIKEQIIFPEIEYDKIDALRGMNITITTTAKTDAEAKALLAAFKFPFKN</sequence>
<evidence type="ECO:0000255" key="1">
    <source>
        <dbReference type="HAMAP-Rule" id="MF_01333"/>
    </source>
</evidence>
<evidence type="ECO:0000305" key="2"/>
<dbReference type="EMBL" id="CP000103">
    <property type="protein sequence ID" value="ABB74086.1"/>
    <property type="molecule type" value="Genomic_DNA"/>
</dbReference>
<dbReference type="RefSeq" id="WP_011380135.1">
    <property type="nucleotide sequence ID" value="NC_007614.1"/>
</dbReference>
<dbReference type="SMR" id="Q2YAY5"/>
<dbReference type="STRING" id="323848.Nmul_A0779"/>
<dbReference type="KEGG" id="nmu:Nmul_A0779"/>
<dbReference type="eggNOG" id="COG0094">
    <property type="taxonomic scope" value="Bacteria"/>
</dbReference>
<dbReference type="HOGENOM" id="CLU_061015_2_1_4"/>
<dbReference type="OrthoDB" id="9806626at2"/>
<dbReference type="Proteomes" id="UP000002718">
    <property type="component" value="Chromosome"/>
</dbReference>
<dbReference type="GO" id="GO:1990904">
    <property type="term" value="C:ribonucleoprotein complex"/>
    <property type="evidence" value="ECO:0007669"/>
    <property type="project" value="UniProtKB-KW"/>
</dbReference>
<dbReference type="GO" id="GO:0005840">
    <property type="term" value="C:ribosome"/>
    <property type="evidence" value="ECO:0007669"/>
    <property type="project" value="UniProtKB-KW"/>
</dbReference>
<dbReference type="GO" id="GO:0019843">
    <property type="term" value="F:rRNA binding"/>
    <property type="evidence" value="ECO:0007669"/>
    <property type="project" value="UniProtKB-UniRule"/>
</dbReference>
<dbReference type="GO" id="GO:0003735">
    <property type="term" value="F:structural constituent of ribosome"/>
    <property type="evidence" value="ECO:0007669"/>
    <property type="project" value="InterPro"/>
</dbReference>
<dbReference type="GO" id="GO:0000049">
    <property type="term" value="F:tRNA binding"/>
    <property type="evidence" value="ECO:0007669"/>
    <property type="project" value="UniProtKB-UniRule"/>
</dbReference>
<dbReference type="GO" id="GO:0006412">
    <property type="term" value="P:translation"/>
    <property type="evidence" value="ECO:0007669"/>
    <property type="project" value="UniProtKB-UniRule"/>
</dbReference>
<dbReference type="FunFam" id="3.30.1440.10:FF:000001">
    <property type="entry name" value="50S ribosomal protein L5"/>
    <property type="match status" value="1"/>
</dbReference>
<dbReference type="Gene3D" id="3.30.1440.10">
    <property type="match status" value="1"/>
</dbReference>
<dbReference type="HAMAP" id="MF_01333_B">
    <property type="entry name" value="Ribosomal_uL5_B"/>
    <property type="match status" value="1"/>
</dbReference>
<dbReference type="InterPro" id="IPR002132">
    <property type="entry name" value="Ribosomal_uL5"/>
</dbReference>
<dbReference type="InterPro" id="IPR020930">
    <property type="entry name" value="Ribosomal_uL5_bac-type"/>
</dbReference>
<dbReference type="InterPro" id="IPR031309">
    <property type="entry name" value="Ribosomal_uL5_C"/>
</dbReference>
<dbReference type="InterPro" id="IPR020929">
    <property type="entry name" value="Ribosomal_uL5_CS"/>
</dbReference>
<dbReference type="InterPro" id="IPR022803">
    <property type="entry name" value="Ribosomal_uL5_dom_sf"/>
</dbReference>
<dbReference type="InterPro" id="IPR031310">
    <property type="entry name" value="Ribosomal_uL5_N"/>
</dbReference>
<dbReference type="NCBIfam" id="NF000585">
    <property type="entry name" value="PRK00010.1"/>
    <property type="match status" value="1"/>
</dbReference>
<dbReference type="PANTHER" id="PTHR11994">
    <property type="entry name" value="60S RIBOSOMAL PROTEIN L11-RELATED"/>
    <property type="match status" value="1"/>
</dbReference>
<dbReference type="Pfam" id="PF00281">
    <property type="entry name" value="Ribosomal_L5"/>
    <property type="match status" value="1"/>
</dbReference>
<dbReference type="Pfam" id="PF00673">
    <property type="entry name" value="Ribosomal_L5_C"/>
    <property type="match status" value="1"/>
</dbReference>
<dbReference type="PIRSF" id="PIRSF002161">
    <property type="entry name" value="Ribosomal_L5"/>
    <property type="match status" value="1"/>
</dbReference>
<dbReference type="SUPFAM" id="SSF55282">
    <property type="entry name" value="RL5-like"/>
    <property type="match status" value="1"/>
</dbReference>
<dbReference type="PROSITE" id="PS00358">
    <property type="entry name" value="RIBOSOMAL_L5"/>
    <property type="match status" value="1"/>
</dbReference>
<proteinExistence type="inferred from homology"/>
<feature type="chain" id="PRO_0000243031" description="Large ribosomal subunit protein uL5">
    <location>
        <begin position="1"/>
        <end position="179"/>
    </location>
</feature>
<keyword id="KW-1185">Reference proteome</keyword>
<keyword id="KW-0687">Ribonucleoprotein</keyword>
<keyword id="KW-0689">Ribosomal protein</keyword>
<keyword id="KW-0694">RNA-binding</keyword>
<keyword id="KW-0699">rRNA-binding</keyword>
<keyword id="KW-0820">tRNA-binding</keyword>
<reference key="1">
    <citation type="submission" date="2005-08" db="EMBL/GenBank/DDBJ databases">
        <title>Complete sequence of chromosome 1 of Nitrosospira multiformis ATCC 25196.</title>
        <authorList>
            <person name="Copeland A."/>
            <person name="Lucas S."/>
            <person name="Lapidus A."/>
            <person name="Barry K."/>
            <person name="Detter J.C."/>
            <person name="Glavina T."/>
            <person name="Hammon N."/>
            <person name="Israni S."/>
            <person name="Pitluck S."/>
            <person name="Chain P."/>
            <person name="Malfatti S."/>
            <person name="Shin M."/>
            <person name="Vergez L."/>
            <person name="Schmutz J."/>
            <person name="Larimer F."/>
            <person name="Land M."/>
            <person name="Hauser L."/>
            <person name="Kyrpides N."/>
            <person name="Lykidis A."/>
            <person name="Richardson P."/>
        </authorList>
    </citation>
    <scope>NUCLEOTIDE SEQUENCE [LARGE SCALE GENOMIC DNA]</scope>
    <source>
        <strain>ATCC 25196 / NCIMB 11849 / C 71</strain>
    </source>
</reference>
<name>RL5_NITMU</name>
<organism>
    <name type="scientific">Nitrosospira multiformis (strain ATCC 25196 / NCIMB 11849 / C 71)</name>
    <dbReference type="NCBI Taxonomy" id="323848"/>
    <lineage>
        <taxon>Bacteria</taxon>
        <taxon>Pseudomonadati</taxon>
        <taxon>Pseudomonadota</taxon>
        <taxon>Betaproteobacteria</taxon>
        <taxon>Nitrosomonadales</taxon>
        <taxon>Nitrosomonadaceae</taxon>
        <taxon>Nitrosospira</taxon>
    </lineage>
</organism>
<protein>
    <recommendedName>
        <fullName evidence="1">Large ribosomal subunit protein uL5</fullName>
    </recommendedName>
    <alternativeName>
        <fullName evidence="2">50S ribosomal protein L5</fullName>
    </alternativeName>
</protein>
<comment type="function">
    <text evidence="1">This is one of the proteins that bind and probably mediate the attachment of the 5S RNA into the large ribosomal subunit, where it forms part of the central protuberance. In the 70S ribosome it contacts protein S13 of the 30S subunit (bridge B1b), connecting the 2 subunits; this bridge is implicated in subunit movement. Contacts the P site tRNA; the 5S rRNA and some of its associated proteins might help stabilize positioning of ribosome-bound tRNAs.</text>
</comment>
<comment type="subunit">
    <text evidence="1">Part of the 50S ribosomal subunit; part of the 5S rRNA/L5/L18/L25 subcomplex. Contacts the 5S rRNA and the P site tRNA. Forms a bridge to the 30S subunit in the 70S ribosome.</text>
</comment>
<comment type="similarity">
    <text evidence="1">Belongs to the universal ribosomal protein uL5 family.</text>
</comment>
<accession>Q2YAY5</accession>
<gene>
    <name evidence="1" type="primary">rplE</name>
    <name type="ordered locus">Nmul_A0779</name>
</gene>